<proteinExistence type="evidence at transcript level"/>
<keyword id="KW-1204">Blood coagulation cascade activating toxin</keyword>
<keyword id="KW-0106">Calcium</keyword>
<keyword id="KW-0165">Cleavage on pair of basic residues</keyword>
<keyword id="KW-1015">Disulfide bond</keyword>
<keyword id="KW-0245">EGF-like domain</keyword>
<keyword id="KW-0301">Gamma-carboxyglutamic acid</keyword>
<keyword id="KW-0325">Glycoprotein</keyword>
<keyword id="KW-1199">Hemostasis impairing toxin</keyword>
<keyword id="KW-0378">Hydrolase</keyword>
<keyword id="KW-0645">Protease</keyword>
<keyword id="KW-0655">Prothrombin activator</keyword>
<keyword id="KW-0677">Repeat</keyword>
<keyword id="KW-0964">Secreted</keyword>
<keyword id="KW-0720">Serine protease</keyword>
<keyword id="KW-0732">Signal</keyword>
<keyword id="KW-0800">Toxin</keyword>
<accession>B5G6G5</accession>
<organism>
    <name type="scientific">Cryptophis nigrescens</name>
    <name type="common">Eastern small-eyed snake</name>
    <name type="synonym">Rhinoplocephalus nigrescens</name>
    <dbReference type="NCBI Taxonomy" id="292442"/>
    <lineage>
        <taxon>Eukaryota</taxon>
        <taxon>Metazoa</taxon>
        <taxon>Chordata</taxon>
        <taxon>Craniata</taxon>
        <taxon>Vertebrata</taxon>
        <taxon>Euteleostomi</taxon>
        <taxon>Lepidosauria</taxon>
        <taxon>Squamata</taxon>
        <taxon>Bifurcata</taxon>
        <taxon>Unidentata</taxon>
        <taxon>Episquamata</taxon>
        <taxon>Toxicofera</taxon>
        <taxon>Serpentes</taxon>
        <taxon>Colubroidea</taxon>
        <taxon>Elapidae</taxon>
        <taxon>Hydrophiinae</taxon>
        <taxon>Cryptophis</taxon>
    </lineage>
</organism>
<reference key="1">
    <citation type="submission" date="2006-08" db="EMBL/GenBank/DDBJ databases">
        <title>Identification of toxin genes from the venom of Australian snakes.</title>
        <authorList>
            <person name="St Pierre L."/>
        </authorList>
    </citation>
    <scope>NUCLEOTIDE SEQUENCE [MRNA]</scope>
    <source>
        <tissue>Venom gland</tissue>
    </source>
</reference>
<reference key="2">
    <citation type="journal article" date="2001" name="Thromb. Haemost.">
        <title>Classification and nomenclature of prothrombin activators isolated from snake venoms.</title>
        <authorList>
            <person name="Manjunatha Kini R."/>
            <person name="Morita T."/>
            <person name="Rosing J."/>
        </authorList>
    </citation>
    <scope>NOMENCLATURE</scope>
</reference>
<name>FAXD_CRYNI</name>
<protein>
    <recommendedName>
        <fullName>Venom prothrombin activator nigrarin-D</fullName>
        <shortName>vPA</shortName>
        <ecNumber>3.4.21.6</ecNumber>
    </recommendedName>
    <alternativeName>
        <fullName>Venom coagulation factor Xa-like protease</fullName>
    </alternativeName>
    <component>
        <recommendedName>
            <fullName>Nigrarin-D light chain</fullName>
        </recommendedName>
    </component>
    <component>
        <recommendedName>
            <fullName>Nigrarin-D heavy chain</fullName>
        </recommendedName>
    </component>
</protein>
<sequence>MAPPLLLCLILTFLWNLPEAESNVFLKSKVANRFLQRTKRSNSIFEEFKAGNIERECIEEKCSKEEAREVFEDNEKTETFWNVYVDGDQCSSNPCHYRGTCKDGIGSYTCTCLPNYEGKNCEKVLFESCRVFNGNCWHFCKSVQNEIQCSCAESYRLGDDGHSCVAEGDFSCGRNIKARNKREASLPDFVQSQKAILLKKSDNPSPDIRIINGMDCKLGECPWQAVLLDEDDDVFCGGTILSSIHVLTAAHCINQTKNISVIVGEIDISRKETIRLLPVDKVYVHTKFVPPSYLYGHQNVDRKTYDYDIAIIRMKTPIQFSENVVPACLPTADFVKQVLMKQDFGIVSGFGRTQYRGQTSNTLKVITVPYVDRRTCMLSSDFPITPNMFCAGYDTLPQDACQGDSGGPHITAYGDTHFITGINSWGEGCAKKGKYGVYTKVSNFIPWIKAIMSLK</sequence>
<dbReference type="EC" id="3.4.21.6"/>
<dbReference type="EMBL" id="DQ917550">
    <property type="protein sequence ID" value="ABK63579.1"/>
    <property type="molecule type" value="mRNA"/>
</dbReference>
<dbReference type="SMR" id="B5G6G5"/>
<dbReference type="MEROPS" id="S01.425"/>
<dbReference type="GO" id="GO:0005576">
    <property type="term" value="C:extracellular region"/>
    <property type="evidence" value="ECO:0000250"/>
    <property type="project" value="UniProtKB"/>
</dbReference>
<dbReference type="GO" id="GO:0005615">
    <property type="term" value="C:extracellular space"/>
    <property type="evidence" value="ECO:0007669"/>
    <property type="project" value="TreeGrafter"/>
</dbReference>
<dbReference type="GO" id="GO:0005509">
    <property type="term" value="F:calcium ion binding"/>
    <property type="evidence" value="ECO:0007669"/>
    <property type="project" value="InterPro"/>
</dbReference>
<dbReference type="GO" id="GO:0016504">
    <property type="term" value="F:peptidase activator activity"/>
    <property type="evidence" value="ECO:0007669"/>
    <property type="project" value="UniProtKB-KW"/>
</dbReference>
<dbReference type="GO" id="GO:0004252">
    <property type="term" value="F:serine-type endopeptidase activity"/>
    <property type="evidence" value="ECO:0000250"/>
    <property type="project" value="UniProtKB"/>
</dbReference>
<dbReference type="GO" id="GO:0090729">
    <property type="term" value="F:toxin activity"/>
    <property type="evidence" value="ECO:0007669"/>
    <property type="project" value="UniProtKB-KW"/>
</dbReference>
<dbReference type="GO" id="GO:0007596">
    <property type="term" value="P:blood coagulation"/>
    <property type="evidence" value="ECO:0007669"/>
    <property type="project" value="InterPro"/>
</dbReference>
<dbReference type="GO" id="GO:0035807">
    <property type="term" value="P:induction of blood coagulation in another organism"/>
    <property type="evidence" value="ECO:0007669"/>
    <property type="project" value="UniProtKB-ARBA"/>
</dbReference>
<dbReference type="GO" id="GO:0006508">
    <property type="term" value="P:proteolysis"/>
    <property type="evidence" value="ECO:0007669"/>
    <property type="project" value="UniProtKB-KW"/>
</dbReference>
<dbReference type="GO" id="GO:0044469">
    <property type="term" value="P:venom-mediated blood coagulation"/>
    <property type="evidence" value="ECO:0000250"/>
    <property type="project" value="UniProtKB"/>
</dbReference>
<dbReference type="CDD" id="cd00054">
    <property type="entry name" value="EGF_CA"/>
    <property type="match status" value="1"/>
</dbReference>
<dbReference type="CDD" id="cd00190">
    <property type="entry name" value="Tryp_SPc"/>
    <property type="match status" value="1"/>
</dbReference>
<dbReference type="FunFam" id="2.10.25.10:FF:000513">
    <property type="entry name" value="Coagulation factor VII"/>
    <property type="match status" value="1"/>
</dbReference>
<dbReference type="FunFam" id="2.40.10.10:FF:000013">
    <property type="entry name" value="Coagulation factor X"/>
    <property type="match status" value="1"/>
</dbReference>
<dbReference type="FunFam" id="2.10.25.10:FF:000162">
    <property type="entry name" value="Coagulation factor X (Predicted)"/>
    <property type="match status" value="1"/>
</dbReference>
<dbReference type="FunFam" id="4.10.740.10:FF:000001">
    <property type="entry name" value="vitamin K-dependent protein S"/>
    <property type="match status" value="1"/>
</dbReference>
<dbReference type="Gene3D" id="4.10.740.10">
    <property type="entry name" value="Coagulation Factor IX"/>
    <property type="match status" value="1"/>
</dbReference>
<dbReference type="Gene3D" id="2.10.25.10">
    <property type="entry name" value="Laminin"/>
    <property type="match status" value="2"/>
</dbReference>
<dbReference type="Gene3D" id="2.40.10.10">
    <property type="entry name" value="Trypsin-like serine proteases"/>
    <property type="match status" value="2"/>
</dbReference>
<dbReference type="InterPro" id="IPR017857">
    <property type="entry name" value="Coagulation_fac-like_Gla_dom"/>
</dbReference>
<dbReference type="InterPro" id="IPR001881">
    <property type="entry name" value="EGF-like_Ca-bd_dom"/>
</dbReference>
<dbReference type="InterPro" id="IPR000742">
    <property type="entry name" value="EGF-like_dom"/>
</dbReference>
<dbReference type="InterPro" id="IPR000152">
    <property type="entry name" value="EGF-type_Asp/Asn_hydroxyl_site"/>
</dbReference>
<dbReference type="InterPro" id="IPR018097">
    <property type="entry name" value="EGF_Ca-bd_CS"/>
</dbReference>
<dbReference type="InterPro" id="IPR035972">
    <property type="entry name" value="GLA-like_dom_SF"/>
</dbReference>
<dbReference type="InterPro" id="IPR000294">
    <property type="entry name" value="GLA_domain"/>
</dbReference>
<dbReference type="InterPro" id="IPR012224">
    <property type="entry name" value="Pept_S1A_FX"/>
</dbReference>
<dbReference type="InterPro" id="IPR050442">
    <property type="entry name" value="Peptidase_S1_coag_factors"/>
</dbReference>
<dbReference type="InterPro" id="IPR009003">
    <property type="entry name" value="Peptidase_S1_PA"/>
</dbReference>
<dbReference type="InterPro" id="IPR043504">
    <property type="entry name" value="Peptidase_S1_PA_chymotrypsin"/>
</dbReference>
<dbReference type="InterPro" id="IPR001314">
    <property type="entry name" value="Peptidase_S1A"/>
</dbReference>
<dbReference type="InterPro" id="IPR001254">
    <property type="entry name" value="Trypsin_dom"/>
</dbReference>
<dbReference type="InterPro" id="IPR018114">
    <property type="entry name" value="TRYPSIN_HIS"/>
</dbReference>
<dbReference type="InterPro" id="IPR033116">
    <property type="entry name" value="TRYPSIN_SER"/>
</dbReference>
<dbReference type="PANTHER" id="PTHR24278">
    <property type="entry name" value="COAGULATION FACTOR"/>
    <property type="match status" value="1"/>
</dbReference>
<dbReference type="PANTHER" id="PTHR24278:SF28">
    <property type="entry name" value="COAGULATION FACTOR X"/>
    <property type="match status" value="1"/>
</dbReference>
<dbReference type="Pfam" id="PF00008">
    <property type="entry name" value="EGF"/>
    <property type="match status" value="1"/>
</dbReference>
<dbReference type="Pfam" id="PF14670">
    <property type="entry name" value="FXa_inhibition"/>
    <property type="match status" value="1"/>
</dbReference>
<dbReference type="Pfam" id="PF00594">
    <property type="entry name" value="Gla"/>
    <property type="match status" value="1"/>
</dbReference>
<dbReference type="Pfam" id="PF00089">
    <property type="entry name" value="Trypsin"/>
    <property type="match status" value="1"/>
</dbReference>
<dbReference type="PIRSF" id="PIRSF001143">
    <property type="entry name" value="Factor_X"/>
    <property type="match status" value="1"/>
</dbReference>
<dbReference type="PRINTS" id="PR00722">
    <property type="entry name" value="CHYMOTRYPSIN"/>
</dbReference>
<dbReference type="PRINTS" id="PR00001">
    <property type="entry name" value="GLABLOOD"/>
</dbReference>
<dbReference type="SMART" id="SM00181">
    <property type="entry name" value="EGF"/>
    <property type="match status" value="2"/>
</dbReference>
<dbReference type="SMART" id="SM00179">
    <property type="entry name" value="EGF_CA"/>
    <property type="match status" value="1"/>
</dbReference>
<dbReference type="SMART" id="SM00069">
    <property type="entry name" value="GLA"/>
    <property type="match status" value="1"/>
</dbReference>
<dbReference type="SMART" id="SM00020">
    <property type="entry name" value="Tryp_SPc"/>
    <property type="match status" value="1"/>
</dbReference>
<dbReference type="SUPFAM" id="SSF57630">
    <property type="entry name" value="GLA-domain"/>
    <property type="match status" value="1"/>
</dbReference>
<dbReference type="SUPFAM" id="SSF50494">
    <property type="entry name" value="Trypsin-like serine proteases"/>
    <property type="match status" value="1"/>
</dbReference>
<dbReference type="PROSITE" id="PS00010">
    <property type="entry name" value="ASX_HYDROXYL"/>
    <property type="match status" value="1"/>
</dbReference>
<dbReference type="PROSITE" id="PS00022">
    <property type="entry name" value="EGF_1"/>
    <property type="match status" value="1"/>
</dbReference>
<dbReference type="PROSITE" id="PS50026">
    <property type="entry name" value="EGF_3"/>
    <property type="match status" value="1"/>
</dbReference>
<dbReference type="PROSITE" id="PS01187">
    <property type="entry name" value="EGF_CA"/>
    <property type="match status" value="1"/>
</dbReference>
<dbReference type="PROSITE" id="PS00011">
    <property type="entry name" value="GLA_1"/>
    <property type="match status" value="1"/>
</dbReference>
<dbReference type="PROSITE" id="PS50998">
    <property type="entry name" value="GLA_2"/>
    <property type="match status" value="1"/>
</dbReference>
<dbReference type="PROSITE" id="PS50240">
    <property type="entry name" value="TRYPSIN_DOM"/>
    <property type="match status" value="1"/>
</dbReference>
<dbReference type="PROSITE" id="PS00134">
    <property type="entry name" value="TRYPSIN_HIS"/>
    <property type="match status" value="1"/>
</dbReference>
<dbReference type="PROSITE" id="PS00135">
    <property type="entry name" value="TRYPSIN_SER"/>
    <property type="match status" value="1"/>
</dbReference>
<evidence type="ECO:0000250" key="1"/>
<evidence type="ECO:0000255" key="2"/>
<evidence type="ECO:0000255" key="3">
    <source>
        <dbReference type="PROSITE-ProRule" id="PRU00076"/>
    </source>
</evidence>
<evidence type="ECO:0000255" key="4">
    <source>
        <dbReference type="PROSITE-ProRule" id="PRU00274"/>
    </source>
</evidence>
<evidence type="ECO:0000255" key="5">
    <source>
        <dbReference type="PROSITE-ProRule" id="PRU00463"/>
    </source>
</evidence>
<feature type="signal peptide" evidence="2">
    <location>
        <begin position="1"/>
        <end position="20"/>
    </location>
</feature>
<feature type="propeptide" id="PRO_0000409901" evidence="1">
    <location>
        <begin position="21"/>
        <end position="40"/>
    </location>
</feature>
<feature type="chain" id="PRO_5000395565" description="Nigrarin-D light chain">
    <location>
        <begin position="41"/>
        <end position="181"/>
    </location>
</feature>
<feature type="propeptide" id="PRO_0000409902" description="Activation peptide" evidence="1">
    <location>
        <begin position="182"/>
        <end position="209"/>
    </location>
</feature>
<feature type="chain" id="PRO_0000409903" description="Nigrarin-D heavy chain">
    <location>
        <begin position="210"/>
        <end position="455"/>
    </location>
</feature>
<feature type="domain" description="Gla" evidence="5">
    <location>
        <begin position="41"/>
        <end position="86"/>
    </location>
</feature>
<feature type="domain" description="EGF-like 1; calcium-binding" evidence="3">
    <location>
        <begin position="86"/>
        <end position="122"/>
    </location>
</feature>
<feature type="domain" description="EGF-like 2" evidence="3">
    <location>
        <begin position="129"/>
        <end position="164"/>
    </location>
</feature>
<feature type="domain" description="Peptidase S1" evidence="4">
    <location>
        <begin position="210"/>
        <end position="453"/>
    </location>
</feature>
<feature type="active site" description="Charge relay system" evidence="1">
    <location>
        <position position="251"/>
    </location>
</feature>
<feature type="active site" description="Charge relay system" evidence="1">
    <location>
        <position position="308"/>
    </location>
</feature>
<feature type="active site" description="Charge relay system" evidence="1">
    <location>
        <position position="405"/>
    </location>
</feature>
<feature type="modified residue" description="4-carboxyglutamate" evidence="5">
    <location>
        <position position="46"/>
    </location>
</feature>
<feature type="modified residue" description="4-carboxyglutamate" evidence="5">
    <location>
        <position position="47"/>
    </location>
</feature>
<feature type="modified residue" description="4-carboxyglutamate" evidence="5">
    <location>
        <position position="54"/>
    </location>
</feature>
<feature type="modified residue" description="4-carboxyglutamate" evidence="5">
    <location>
        <position position="56"/>
    </location>
</feature>
<feature type="modified residue" description="4-carboxyglutamate" evidence="5">
    <location>
        <position position="59"/>
    </location>
</feature>
<feature type="modified residue" description="4-carboxyglutamate" evidence="5">
    <location>
        <position position="60"/>
    </location>
</feature>
<feature type="modified residue" description="4-carboxyglutamate" evidence="5">
    <location>
        <position position="65"/>
    </location>
</feature>
<feature type="modified residue" description="4-carboxyglutamate" evidence="5">
    <location>
        <position position="66"/>
    </location>
</feature>
<feature type="modified residue" description="4-carboxyglutamate" evidence="5">
    <location>
        <position position="69"/>
    </location>
</feature>
<feature type="modified residue" description="4-carboxyglutamate" evidence="5">
    <location>
        <position position="72"/>
    </location>
</feature>
<feature type="modified residue" description="4-carboxyglutamate" evidence="5">
    <location>
        <position position="75"/>
    </location>
</feature>
<feature type="glycosylation site" description="O-linked (Hex...) serine" evidence="1">
    <location>
        <position position="92"/>
    </location>
</feature>
<feature type="glycosylation site" description="N-linked (GlcNAc...) asparagine" evidence="2">
    <location>
        <position position="254"/>
    </location>
</feature>
<feature type="disulfide bond" evidence="1">
    <location>
        <begin position="57"/>
        <end position="62"/>
    </location>
</feature>
<feature type="disulfide bond" evidence="1">
    <location>
        <begin position="90"/>
        <end position="101"/>
    </location>
</feature>
<feature type="disulfide bond" evidence="1">
    <location>
        <begin position="95"/>
        <end position="110"/>
    </location>
</feature>
<feature type="disulfide bond" evidence="1">
    <location>
        <begin position="112"/>
        <end position="121"/>
    </location>
</feature>
<feature type="disulfide bond" evidence="1">
    <location>
        <begin position="129"/>
        <end position="140"/>
    </location>
</feature>
<feature type="disulfide bond" evidence="1">
    <location>
        <begin position="136"/>
        <end position="149"/>
    </location>
</feature>
<feature type="disulfide bond" evidence="1">
    <location>
        <begin position="151"/>
        <end position="164"/>
    </location>
</feature>
<feature type="disulfide bond" description="Interchain (between light and heavy chains)" evidence="3 4 5">
    <location>
        <begin position="172"/>
        <end position="328"/>
    </location>
</feature>
<feature type="disulfide bond" evidence="1">
    <location>
        <begin position="216"/>
        <end position="221"/>
    </location>
</feature>
<feature type="disulfide bond" evidence="1">
    <location>
        <begin position="236"/>
        <end position="252"/>
    </location>
</feature>
<feature type="disulfide bond" evidence="1">
    <location>
        <begin position="376"/>
        <end position="390"/>
    </location>
</feature>
<feature type="disulfide bond" evidence="1">
    <location>
        <begin position="401"/>
        <end position="429"/>
    </location>
</feature>
<comment type="function">
    <text evidence="1">Snake prothrombin activator that attacks the hemostatic system of prey. This protein is functionally similar to blood coagulation factor Xa (By similarity).</text>
</comment>
<comment type="catalytic activity">
    <reaction>
        <text>Selective cleavage of Arg-|-Thr and then Arg-|-Ile bonds in prothrombin to form thrombin.</text>
        <dbReference type="EC" id="3.4.21.6"/>
    </reaction>
</comment>
<comment type="subunit">
    <text evidence="1">Heterodimer of a light chain and a heavy chain; disulfide-linked.</text>
</comment>
<comment type="subcellular location">
    <subcellularLocation>
        <location evidence="1">Secreted</location>
    </subcellularLocation>
</comment>
<comment type="tissue specificity">
    <text>Expressed by the venom gland.</text>
</comment>
<comment type="PTM">
    <text evidence="1">The vitamin K-dependent, enzymatic carboxylation of some glutamate residues allows the modified protein to bind calcium.</text>
</comment>
<comment type="miscellaneous">
    <text>Is classified in the group D of snake venom prothrombin activators, since it requires the mammalian factor Va for maximal activity for the cleavage of prothrombin.</text>
</comment>
<comment type="miscellaneous">
    <text>In contrast to blood coagulation factors that circulate as inactive zymogen in plasma, venom prothrombin activators are always found in the active form in the venom.</text>
</comment>
<comment type="similarity">
    <text evidence="4">Belongs to the peptidase S1 family. Snake venom subfamily.</text>
</comment>